<keyword id="KW-0030">Aminoacyl-tRNA synthetase</keyword>
<keyword id="KW-0067">ATP-binding</keyword>
<keyword id="KW-0963">Cytoplasm</keyword>
<keyword id="KW-0436">Ligase</keyword>
<keyword id="KW-0547">Nucleotide-binding</keyword>
<keyword id="KW-0648">Protein biosynthesis</keyword>
<keyword id="KW-1185">Reference proteome</keyword>
<sequence length="592" mass="66792">MRTHYCGHVSETDLDQEVTLCGWAHRRRDHGGVIFIDLRDREGLVQVVFDPDRPETFALAERVRSEFVLKVRGRVRRRPAGTENPDLPTGQVEVLGLELDLLNPAKTPPFQLDEHEQAGEDVRLRYRYVDLRRPEMLQRLRARARITSNLRRFLDEHGFLDIETPMLTRATPEGARDYLVPSRTHPGSFFALPQSPQLFKQLLMMAGMDRYYQIVRCFRDEDLRADRQPEFTQLDIETSFMDEEGIMHLTERMMRRLFADVLQVDLPDPFPRMGYAEAMARFGSDKPDLRIPLELVEVADLMGGVEFKVFAGPAADPRGRVAALHVPGGAGLTRKQIDDYTQFVGRYGAKGLAYIKVNDPAQGREGLQSPILKFLTDEAVDGILRRTEARAGDLIFFGADKAKVVNDALGALRVKLGHDLAMVEDEWRPLWVVDFPMFEYDEKDGRLYALHHPFTAPNVDDPAELADKDPEQLVSRAYDMVLNGTELGGGSVRIHRQDMQQAVFRLLGIDEDEARAKFGFLLDALEYGAPPHGGIAFGLDRLVMLMTGASSIREVMAFPKTQTAACLLTDAPAEVDIAQLQELALRITKPQA</sequence>
<reference key="1">
    <citation type="submission" date="2006-08" db="EMBL/GenBank/DDBJ databases">
        <title>Complete sequence of Alkalilimnicola ehrilichei MLHE-1.</title>
        <authorList>
            <person name="Copeland A."/>
            <person name="Lucas S."/>
            <person name="Lapidus A."/>
            <person name="Barry K."/>
            <person name="Detter J.C."/>
            <person name="Glavina del Rio T."/>
            <person name="Hammon N."/>
            <person name="Israni S."/>
            <person name="Dalin E."/>
            <person name="Tice H."/>
            <person name="Pitluck S."/>
            <person name="Sims D."/>
            <person name="Brettin T."/>
            <person name="Bruce D."/>
            <person name="Han C."/>
            <person name="Tapia R."/>
            <person name="Gilna P."/>
            <person name="Schmutz J."/>
            <person name="Larimer F."/>
            <person name="Land M."/>
            <person name="Hauser L."/>
            <person name="Kyrpides N."/>
            <person name="Mikhailova N."/>
            <person name="Oremland R.S."/>
            <person name="Hoeft S.E."/>
            <person name="Switzer-Blum J."/>
            <person name="Kulp T."/>
            <person name="King G."/>
            <person name="Tabita R."/>
            <person name="Witte B."/>
            <person name="Santini J.M."/>
            <person name="Basu P."/>
            <person name="Hollibaugh J.T."/>
            <person name="Xie G."/>
            <person name="Stolz J.F."/>
            <person name="Richardson P."/>
        </authorList>
    </citation>
    <scope>NUCLEOTIDE SEQUENCE [LARGE SCALE GENOMIC DNA]</scope>
    <source>
        <strain>ATCC BAA-1101 / DSM 17681 / MLHE-1</strain>
    </source>
</reference>
<name>SYDND_ALKEH</name>
<organism>
    <name type="scientific">Alkalilimnicola ehrlichii (strain ATCC BAA-1101 / DSM 17681 / MLHE-1)</name>
    <dbReference type="NCBI Taxonomy" id="187272"/>
    <lineage>
        <taxon>Bacteria</taxon>
        <taxon>Pseudomonadati</taxon>
        <taxon>Pseudomonadota</taxon>
        <taxon>Gammaproteobacteria</taxon>
        <taxon>Chromatiales</taxon>
        <taxon>Ectothiorhodospiraceae</taxon>
        <taxon>Alkalilimnicola</taxon>
    </lineage>
</organism>
<evidence type="ECO:0000255" key="1">
    <source>
        <dbReference type="HAMAP-Rule" id="MF_00044"/>
    </source>
</evidence>
<gene>
    <name evidence="1" type="primary">aspS</name>
    <name type="ordered locus">Mlg_2665</name>
</gene>
<protein>
    <recommendedName>
        <fullName evidence="1">Aspartate--tRNA(Asp/Asn) ligase</fullName>
        <ecNumber evidence="1">6.1.1.23</ecNumber>
    </recommendedName>
    <alternativeName>
        <fullName evidence="1">Aspartyl-tRNA synthetase</fullName>
        <shortName evidence="1">AspRS</shortName>
    </alternativeName>
    <alternativeName>
        <fullName evidence="1">Non-discriminating aspartyl-tRNA synthetase</fullName>
        <shortName evidence="1">ND-AspRS</shortName>
    </alternativeName>
</protein>
<accession>Q0A582</accession>
<comment type="function">
    <text evidence="1">Aspartyl-tRNA synthetase with relaxed tRNA specificity since it is able to aspartylate not only its cognate tRNA(Asp) but also tRNA(Asn). Reaction proceeds in two steps: L-aspartate is first activated by ATP to form Asp-AMP and then transferred to the acceptor end of tRNA(Asp/Asn).</text>
</comment>
<comment type="catalytic activity">
    <reaction evidence="1">
        <text>tRNA(Asx) + L-aspartate + ATP = L-aspartyl-tRNA(Asx) + AMP + diphosphate</text>
        <dbReference type="Rhea" id="RHEA:18349"/>
        <dbReference type="Rhea" id="RHEA-COMP:9710"/>
        <dbReference type="Rhea" id="RHEA-COMP:9711"/>
        <dbReference type="ChEBI" id="CHEBI:29991"/>
        <dbReference type="ChEBI" id="CHEBI:30616"/>
        <dbReference type="ChEBI" id="CHEBI:33019"/>
        <dbReference type="ChEBI" id="CHEBI:78442"/>
        <dbReference type="ChEBI" id="CHEBI:78516"/>
        <dbReference type="ChEBI" id="CHEBI:456215"/>
        <dbReference type="EC" id="6.1.1.23"/>
    </reaction>
</comment>
<comment type="subunit">
    <text evidence="1">Homodimer.</text>
</comment>
<comment type="subcellular location">
    <subcellularLocation>
        <location evidence="1">Cytoplasm</location>
    </subcellularLocation>
</comment>
<comment type="similarity">
    <text evidence="1">Belongs to the class-II aminoacyl-tRNA synthetase family. Type 1 subfamily.</text>
</comment>
<proteinExistence type="inferred from homology"/>
<dbReference type="EC" id="6.1.1.23" evidence="1"/>
<dbReference type="EMBL" id="CP000453">
    <property type="protein sequence ID" value="ABI58005.1"/>
    <property type="molecule type" value="Genomic_DNA"/>
</dbReference>
<dbReference type="RefSeq" id="WP_011630398.1">
    <property type="nucleotide sequence ID" value="NC_008340.1"/>
</dbReference>
<dbReference type="SMR" id="Q0A582"/>
<dbReference type="KEGG" id="aeh:Mlg_2665"/>
<dbReference type="eggNOG" id="COG0173">
    <property type="taxonomic scope" value="Bacteria"/>
</dbReference>
<dbReference type="HOGENOM" id="CLU_014330_3_2_6"/>
<dbReference type="OrthoDB" id="9802326at2"/>
<dbReference type="Proteomes" id="UP000001962">
    <property type="component" value="Chromosome"/>
</dbReference>
<dbReference type="GO" id="GO:0005737">
    <property type="term" value="C:cytoplasm"/>
    <property type="evidence" value="ECO:0007669"/>
    <property type="project" value="UniProtKB-SubCell"/>
</dbReference>
<dbReference type="GO" id="GO:0004815">
    <property type="term" value="F:aspartate-tRNA ligase activity"/>
    <property type="evidence" value="ECO:0007669"/>
    <property type="project" value="UniProtKB-UniRule"/>
</dbReference>
<dbReference type="GO" id="GO:0050560">
    <property type="term" value="F:aspartate-tRNA(Asn) ligase activity"/>
    <property type="evidence" value="ECO:0007669"/>
    <property type="project" value="UniProtKB-EC"/>
</dbReference>
<dbReference type="GO" id="GO:0005524">
    <property type="term" value="F:ATP binding"/>
    <property type="evidence" value="ECO:0007669"/>
    <property type="project" value="UniProtKB-UniRule"/>
</dbReference>
<dbReference type="GO" id="GO:0003676">
    <property type="term" value="F:nucleic acid binding"/>
    <property type="evidence" value="ECO:0007669"/>
    <property type="project" value="InterPro"/>
</dbReference>
<dbReference type="GO" id="GO:0006422">
    <property type="term" value="P:aspartyl-tRNA aminoacylation"/>
    <property type="evidence" value="ECO:0007669"/>
    <property type="project" value="UniProtKB-UniRule"/>
</dbReference>
<dbReference type="CDD" id="cd00777">
    <property type="entry name" value="AspRS_core"/>
    <property type="match status" value="1"/>
</dbReference>
<dbReference type="CDD" id="cd04317">
    <property type="entry name" value="EcAspRS_like_N"/>
    <property type="match status" value="1"/>
</dbReference>
<dbReference type="Gene3D" id="3.30.930.10">
    <property type="entry name" value="Bira Bifunctional Protein, Domain 2"/>
    <property type="match status" value="1"/>
</dbReference>
<dbReference type="Gene3D" id="3.30.1360.30">
    <property type="entry name" value="GAD-like domain"/>
    <property type="match status" value="1"/>
</dbReference>
<dbReference type="Gene3D" id="2.40.50.140">
    <property type="entry name" value="Nucleic acid-binding proteins"/>
    <property type="match status" value="1"/>
</dbReference>
<dbReference type="HAMAP" id="MF_00044">
    <property type="entry name" value="Asp_tRNA_synth_type1"/>
    <property type="match status" value="1"/>
</dbReference>
<dbReference type="InterPro" id="IPR004364">
    <property type="entry name" value="Aa-tRNA-synt_II"/>
</dbReference>
<dbReference type="InterPro" id="IPR006195">
    <property type="entry name" value="aa-tRNA-synth_II"/>
</dbReference>
<dbReference type="InterPro" id="IPR045864">
    <property type="entry name" value="aa-tRNA-synth_II/BPL/LPL"/>
</dbReference>
<dbReference type="InterPro" id="IPR004524">
    <property type="entry name" value="Asp-tRNA-ligase_1"/>
</dbReference>
<dbReference type="InterPro" id="IPR047089">
    <property type="entry name" value="Asp-tRNA-ligase_1_N"/>
</dbReference>
<dbReference type="InterPro" id="IPR002312">
    <property type="entry name" value="Asp/Asn-tRNA-synth_IIb"/>
</dbReference>
<dbReference type="InterPro" id="IPR047090">
    <property type="entry name" value="AspRS_core"/>
</dbReference>
<dbReference type="InterPro" id="IPR004115">
    <property type="entry name" value="GAD-like_sf"/>
</dbReference>
<dbReference type="InterPro" id="IPR029351">
    <property type="entry name" value="GAD_dom"/>
</dbReference>
<dbReference type="InterPro" id="IPR012340">
    <property type="entry name" value="NA-bd_OB-fold"/>
</dbReference>
<dbReference type="InterPro" id="IPR004365">
    <property type="entry name" value="NA-bd_OB_tRNA"/>
</dbReference>
<dbReference type="NCBIfam" id="TIGR00459">
    <property type="entry name" value="aspS_bact"/>
    <property type="match status" value="1"/>
</dbReference>
<dbReference type="NCBIfam" id="NF001750">
    <property type="entry name" value="PRK00476.1"/>
    <property type="match status" value="1"/>
</dbReference>
<dbReference type="PANTHER" id="PTHR22594:SF5">
    <property type="entry name" value="ASPARTATE--TRNA LIGASE, MITOCHONDRIAL"/>
    <property type="match status" value="1"/>
</dbReference>
<dbReference type="PANTHER" id="PTHR22594">
    <property type="entry name" value="ASPARTYL/LYSYL-TRNA SYNTHETASE"/>
    <property type="match status" value="1"/>
</dbReference>
<dbReference type="Pfam" id="PF02938">
    <property type="entry name" value="GAD"/>
    <property type="match status" value="1"/>
</dbReference>
<dbReference type="Pfam" id="PF00152">
    <property type="entry name" value="tRNA-synt_2"/>
    <property type="match status" value="1"/>
</dbReference>
<dbReference type="Pfam" id="PF01336">
    <property type="entry name" value="tRNA_anti-codon"/>
    <property type="match status" value="1"/>
</dbReference>
<dbReference type="PRINTS" id="PR01042">
    <property type="entry name" value="TRNASYNTHASP"/>
</dbReference>
<dbReference type="SUPFAM" id="SSF55681">
    <property type="entry name" value="Class II aaRS and biotin synthetases"/>
    <property type="match status" value="1"/>
</dbReference>
<dbReference type="SUPFAM" id="SSF55261">
    <property type="entry name" value="GAD domain-like"/>
    <property type="match status" value="1"/>
</dbReference>
<dbReference type="SUPFAM" id="SSF50249">
    <property type="entry name" value="Nucleic acid-binding proteins"/>
    <property type="match status" value="1"/>
</dbReference>
<dbReference type="PROSITE" id="PS50862">
    <property type="entry name" value="AA_TRNA_LIGASE_II"/>
    <property type="match status" value="1"/>
</dbReference>
<feature type="chain" id="PRO_1000006631" description="Aspartate--tRNA(Asp/Asn) ligase">
    <location>
        <begin position="1"/>
        <end position="592"/>
    </location>
</feature>
<feature type="region of interest" description="Aspartate" evidence="1">
    <location>
        <begin position="197"/>
        <end position="200"/>
    </location>
</feature>
<feature type="binding site" evidence="1">
    <location>
        <position position="173"/>
    </location>
    <ligand>
        <name>L-aspartate</name>
        <dbReference type="ChEBI" id="CHEBI:29991"/>
    </ligand>
</feature>
<feature type="binding site" evidence="1">
    <location>
        <begin position="219"/>
        <end position="221"/>
    </location>
    <ligand>
        <name>ATP</name>
        <dbReference type="ChEBI" id="CHEBI:30616"/>
    </ligand>
</feature>
<feature type="binding site" evidence="1">
    <location>
        <position position="219"/>
    </location>
    <ligand>
        <name>L-aspartate</name>
        <dbReference type="ChEBI" id="CHEBI:29991"/>
    </ligand>
</feature>
<feature type="binding site" evidence="1">
    <location>
        <position position="228"/>
    </location>
    <ligand>
        <name>ATP</name>
        <dbReference type="ChEBI" id="CHEBI:30616"/>
    </ligand>
</feature>
<feature type="binding site" evidence="1">
    <location>
        <position position="451"/>
    </location>
    <ligand>
        <name>L-aspartate</name>
        <dbReference type="ChEBI" id="CHEBI:29991"/>
    </ligand>
</feature>
<feature type="binding site" evidence="1">
    <location>
        <position position="486"/>
    </location>
    <ligand>
        <name>ATP</name>
        <dbReference type="ChEBI" id="CHEBI:30616"/>
    </ligand>
</feature>
<feature type="binding site" evidence="1">
    <location>
        <position position="493"/>
    </location>
    <ligand>
        <name>L-aspartate</name>
        <dbReference type="ChEBI" id="CHEBI:29991"/>
    </ligand>
</feature>
<feature type="binding site" evidence="1">
    <location>
        <begin position="538"/>
        <end position="541"/>
    </location>
    <ligand>
        <name>ATP</name>
        <dbReference type="ChEBI" id="CHEBI:30616"/>
    </ligand>
</feature>
<feature type="site" description="Important for tRNA non-discrimination" evidence="1">
    <location>
        <position position="30"/>
    </location>
</feature>
<feature type="site" description="Important for tRNA non-discrimination" evidence="1">
    <location>
        <position position="81"/>
    </location>
</feature>